<sequence length="69" mass="7971">MPLTVNCPICKTPVEWVPQSEFKPFCSERCKMIDLGDWASEKHAIPVKSEFDLDALDELGYDEESFFKE</sequence>
<protein>
    <recommendedName>
        <fullName evidence="1">DNA gyrase inhibitor YacG</fullName>
    </recommendedName>
</protein>
<feature type="chain" id="PRO_1000056995" description="DNA gyrase inhibitor YacG">
    <location>
        <begin position="1"/>
        <end position="69"/>
    </location>
</feature>
<feature type="binding site" evidence="1">
    <location>
        <position position="7"/>
    </location>
    <ligand>
        <name>Zn(2+)</name>
        <dbReference type="ChEBI" id="CHEBI:29105"/>
    </ligand>
</feature>
<feature type="binding site" evidence="1">
    <location>
        <position position="10"/>
    </location>
    <ligand>
        <name>Zn(2+)</name>
        <dbReference type="ChEBI" id="CHEBI:29105"/>
    </ligand>
</feature>
<feature type="binding site" evidence="1">
    <location>
        <position position="26"/>
    </location>
    <ligand>
        <name>Zn(2+)</name>
        <dbReference type="ChEBI" id="CHEBI:29105"/>
    </ligand>
</feature>
<feature type="binding site" evidence="1">
    <location>
        <position position="30"/>
    </location>
    <ligand>
        <name>Zn(2+)</name>
        <dbReference type="ChEBI" id="CHEBI:29105"/>
    </ligand>
</feature>
<dbReference type="EMBL" id="CP000444">
    <property type="protein sequence ID" value="ABI44590.1"/>
    <property type="molecule type" value="Genomic_DNA"/>
</dbReference>
<dbReference type="SMR" id="Q0HQL5"/>
<dbReference type="KEGG" id="shm:Shewmr7_3610"/>
<dbReference type="HOGENOM" id="CLU_178280_1_0_6"/>
<dbReference type="GO" id="GO:0008657">
    <property type="term" value="F:DNA topoisomerase type II (double strand cut, ATP-hydrolyzing) inhibitor activity"/>
    <property type="evidence" value="ECO:0007669"/>
    <property type="project" value="UniProtKB-UniRule"/>
</dbReference>
<dbReference type="GO" id="GO:0008270">
    <property type="term" value="F:zinc ion binding"/>
    <property type="evidence" value="ECO:0007669"/>
    <property type="project" value="UniProtKB-UniRule"/>
</dbReference>
<dbReference type="GO" id="GO:0006355">
    <property type="term" value="P:regulation of DNA-templated transcription"/>
    <property type="evidence" value="ECO:0007669"/>
    <property type="project" value="InterPro"/>
</dbReference>
<dbReference type="Gene3D" id="3.30.50.10">
    <property type="entry name" value="Erythroid Transcription Factor GATA-1, subunit A"/>
    <property type="match status" value="1"/>
</dbReference>
<dbReference type="HAMAP" id="MF_00649">
    <property type="entry name" value="DNA_gyrase_inhibitor_YacG"/>
    <property type="match status" value="1"/>
</dbReference>
<dbReference type="InterPro" id="IPR005584">
    <property type="entry name" value="DNA_gyrase_inhibitor_YacG"/>
</dbReference>
<dbReference type="InterPro" id="IPR013088">
    <property type="entry name" value="Znf_NHR/GATA"/>
</dbReference>
<dbReference type="NCBIfam" id="NF001638">
    <property type="entry name" value="PRK00418.1"/>
    <property type="match status" value="1"/>
</dbReference>
<dbReference type="PANTHER" id="PTHR36150">
    <property type="entry name" value="DNA GYRASE INHIBITOR YACG"/>
    <property type="match status" value="1"/>
</dbReference>
<dbReference type="PANTHER" id="PTHR36150:SF1">
    <property type="entry name" value="DNA GYRASE INHIBITOR YACG"/>
    <property type="match status" value="1"/>
</dbReference>
<dbReference type="Pfam" id="PF03884">
    <property type="entry name" value="YacG"/>
    <property type="match status" value="1"/>
</dbReference>
<dbReference type="SUPFAM" id="SSF57716">
    <property type="entry name" value="Glucocorticoid receptor-like (DNA-binding domain)"/>
    <property type="match status" value="1"/>
</dbReference>
<organism>
    <name type="scientific">Shewanella sp. (strain MR-7)</name>
    <dbReference type="NCBI Taxonomy" id="60481"/>
    <lineage>
        <taxon>Bacteria</taxon>
        <taxon>Pseudomonadati</taxon>
        <taxon>Pseudomonadota</taxon>
        <taxon>Gammaproteobacteria</taxon>
        <taxon>Alteromonadales</taxon>
        <taxon>Shewanellaceae</taxon>
        <taxon>Shewanella</taxon>
    </lineage>
</organism>
<accession>Q0HQL5</accession>
<proteinExistence type="inferred from homology"/>
<keyword id="KW-0479">Metal-binding</keyword>
<keyword id="KW-0862">Zinc</keyword>
<gene>
    <name evidence="1" type="primary">yacG</name>
    <name type="ordered locus">Shewmr7_3610</name>
</gene>
<name>YACG_SHESR</name>
<reference key="1">
    <citation type="submission" date="2006-08" db="EMBL/GenBank/DDBJ databases">
        <title>Complete sequence of chromosome 1 of Shewanella sp. MR-7.</title>
        <authorList>
            <person name="Copeland A."/>
            <person name="Lucas S."/>
            <person name="Lapidus A."/>
            <person name="Barry K."/>
            <person name="Detter J.C."/>
            <person name="Glavina del Rio T."/>
            <person name="Hammon N."/>
            <person name="Israni S."/>
            <person name="Dalin E."/>
            <person name="Tice H."/>
            <person name="Pitluck S."/>
            <person name="Kiss H."/>
            <person name="Brettin T."/>
            <person name="Bruce D."/>
            <person name="Han C."/>
            <person name="Tapia R."/>
            <person name="Gilna P."/>
            <person name="Schmutz J."/>
            <person name="Larimer F."/>
            <person name="Land M."/>
            <person name="Hauser L."/>
            <person name="Kyrpides N."/>
            <person name="Mikhailova N."/>
            <person name="Nealson K."/>
            <person name="Konstantinidis K."/>
            <person name="Klappenbach J."/>
            <person name="Tiedje J."/>
            <person name="Richardson P."/>
        </authorList>
    </citation>
    <scope>NUCLEOTIDE SEQUENCE [LARGE SCALE GENOMIC DNA]</scope>
    <source>
        <strain>MR-7</strain>
    </source>
</reference>
<comment type="function">
    <text evidence="1">Inhibits all the catalytic activities of DNA gyrase by preventing its interaction with DNA. Acts by binding directly to the C-terminal domain of GyrB, which probably disrupts DNA binding by the gyrase.</text>
</comment>
<comment type="cofactor">
    <cofactor evidence="1">
        <name>Zn(2+)</name>
        <dbReference type="ChEBI" id="CHEBI:29105"/>
    </cofactor>
    <text evidence="1">Binds 1 zinc ion.</text>
</comment>
<comment type="subunit">
    <text evidence="1">Interacts with GyrB.</text>
</comment>
<comment type="similarity">
    <text evidence="1">Belongs to the DNA gyrase inhibitor YacG family.</text>
</comment>
<evidence type="ECO:0000255" key="1">
    <source>
        <dbReference type="HAMAP-Rule" id="MF_00649"/>
    </source>
</evidence>